<keyword id="KW-0012">Acyltransferase</keyword>
<keyword id="KW-0284">Flavonoid biosynthesis</keyword>
<keyword id="KW-1185">Reference proteome</keyword>
<keyword id="KW-0808">Transferase</keyword>
<accession>P30081</accession>
<dbReference type="EC" id="2.3.1.74"/>
<dbReference type="EMBL" id="M98871">
    <property type="protein sequence ID" value="AAA33950.1"/>
    <property type="molecule type" value="Genomic_DNA"/>
</dbReference>
<dbReference type="PIR" id="JQ1071">
    <property type="entry name" value="JQ1071"/>
</dbReference>
<dbReference type="PIR" id="JQ2250">
    <property type="entry name" value="JQ2250"/>
</dbReference>
<dbReference type="RefSeq" id="NP_001340309.1">
    <property type="nucleotide sequence ID" value="NM_001353380.1"/>
</dbReference>
<dbReference type="RefSeq" id="XP_003517529.1">
    <property type="nucleotide sequence ID" value="XM_003517481.3"/>
</dbReference>
<dbReference type="SMR" id="P30081"/>
<dbReference type="STRING" id="3847.P30081"/>
<dbReference type="PaxDb" id="3847-GLYMA01G43880.1"/>
<dbReference type="EnsemblPlants" id="KRH77699">
    <property type="protein sequence ID" value="KRH77699"/>
    <property type="gene ID" value="GLYMA_01G228700"/>
</dbReference>
<dbReference type="GeneID" id="100782897"/>
<dbReference type="Gramene" id="KRH77699">
    <property type="protein sequence ID" value="KRH77699"/>
    <property type="gene ID" value="GLYMA_01G228700"/>
</dbReference>
<dbReference type="eggNOG" id="ENOG502QRSY">
    <property type="taxonomic scope" value="Eukaryota"/>
</dbReference>
<dbReference type="HOGENOM" id="CLU_034992_2_0_1"/>
<dbReference type="InParanoid" id="P30081"/>
<dbReference type="OMA" id="TWVCHPG"/>
<dbReference type="OrthoDB" id="1854138at2759"/>
<dbReference type="BRENDA" id="2.3.1.74">
    <property type="organism ID" value="2483"/>
</dbReference>
<dbReference type="UniPathway" id="UPA00154"/>
<dbReference type="Proteomes" id="UP000008827">
    <property type="component" value="Chromosome 1"/>
</dbReference>
<dbReference type="GO" id="GO:0016747">
    <property type="term" value="F:acyltransferase activity, transferring groups other than amino-acyl groups"/>
    <property type="evidence" value="ECO:0000318"/>
    <property type="project" value="GO_Central"/>
</dbReference>
<dbReference type="GO" id="GO:0016210">
    <property type="term" value="F:naringenin-chalcone synthase activity"/>
    <property type="evidence" value="ECO:0007669"/>
    <property type="project" value="UniProtKB-EC"/>
</dbReference>
<dbReference type="GO" id="GO:0009813">
    <property type="term" value="P:flavonoid biosynthetic process"/>
    <property type="evidence" value="ECO:0007669"/>
    <property type="project" value="UniProtKB-UniPathway"/>
</dbReference>
<dbReference type="GO" id="GO:0030639">
    <property type="term" value="P:polyketide biosynthetic process"/>
    <property type="evidence" value="ECO:0000318"/>
    <property type="project" value="GO_Central"/>
</dbReference>
<dbReference type="CDD" id="cd00831">
    <property type="entry name" value="CHS_like"/>
    <property type="match status" value="1"/>
</dbReference>
<dbReference type="FunFam" id="3.40.47.10:FF:000014">
    <property type="entry name" value="Chalcone synthase 1"/>
    <property type="match status" value="1"/>
</dbReference>
<dbReference type="FunFam" id="3.40.47.10:FF:000025">
    <property type="entry name" value="Chalcone synthase 2"/>
    <property type="match status" value="1"/>
</dbReference>
<dbReference type="Gene3D" id="3.40.47.10">
    <property type="match status" value="2"/>
</dbReference>
<dbReference type="InterPro" id="IPR012328">
    <property type="entry name" value="Chalcone/stilbene_synt_C"/>
</dbReference>
<dbReference type="InterPro" id="IPR001099">
    <property type="entry name" value="Chalcone/stilbene_synt_N"/>
</dbReference>
<dbReference type="InterPro" id="IPR018088">
    <property type="entry name" value="Chalcone/stilbene_synthase_AS"/>
</dbReference>
<dbReference type="InterPro" id="IPR011141">
    <property type="entry name" value="Polyketide_synthase_type-III"/>
</dbReference>
<dbReference type="InterPro" id="IPR016039">
    <property type="entry name" value="Thiolase-like"/>
</dbReference>
<dbReference type="PANTHER" id="PTHR11877:SF62">
    <property type="entry name" value="CHALCONE SYNTHASE 7"/>
    <property type="match status" value="1"/>
</dbReference>
<dbReference type="PANTHER" id="PTHR11877">
    <property type="entry name" value="HYDROXYMETHYLGLUTARYL-COA SYNTHASE"/>
    <property type="match status" value="1"/>
</dbReference>
<dbReference type="Pfam" id="PF02797">
    <property type="entry name" value="Chal_sti_synt_C"/>
    <property type="match status" value="1"/>
</dbReference>
<dbReference type="Pfam" id="PF00195">
    <property type="entry name" value="Chal_sti_synt_N"/>
    <property type="match status" value="1"/>
</dbReference>
<dbReference type="PIRSF" id="PIRSF000451">
    <property type="entry name" value="PKS_III"/>
    <property type="match status" value="1"/>
</dbReference>
<dbReference type="SUPFAM" id="SSF53901">
    <property type="entry name" value="Thiolase-like"/>
    <property type="match status" value="2"/>
</dbReference>
<dbReference type="PROSITE" id="PS00441">
    <property type="entry name" value="CHALCONE_SYNTH"/>
    <property type="match status" value="1"/>
</dbReference>
<reference key="1">
    <citation type="journal article" date="1993" name="Plant Physiol.">
        <title>Nucleotide sequence and putative regulatory elements of a nodule-development-specific member of the soybean (Glycine max) chalcone synthase multigene family, Gmchs 7.</title>
        <authorList>
            <person name="Akada S."/>
            <person name="Kung S.D."/>
            <person name="Dube S.K."/>
        </authorList>
    </citation>
    <scope>NUCLEOTIDE SEQUENCE [GENOMIC DNA]</scope>
    <source>
        <strain>cv. Williams</strain>
    </source>
</reference>
<protein>
    <recommendedName>
        <fullName>Chalcone synthase 7</fullName>
        <ecNumber>2.3.1.74</ecNumber>
    </recommendedName>
    <alternativeName>
        <fullName>Naringenin-chalcone synthase 7</fullName>
    </alternativeName>
</protein>
<gene>
    <name type="primary">CHS7</name>
</gene>
<proteinExistence type="inferred from homology"/>
<evidence type="ECO:0000255" key="1">
    <source>
        <dbReference type="PROSITE-ProRule" id="PRU10023"/>
    </source>
</evidence>
<evidence type="ECO:0000305" key="2"/>
<organism>
    <name type="scientific">Glycine max</name>
    <name type="common">Soybean</name>
    <name type="synonym">Glycine hispida</name>
    <dbReference type="NCBI Taxonomy" id="3847"/>
    <lineage>
        <taxon>Eukaryota</taxon>
        <taxon>Viridiplantae</taxon>
        <taxon>Streptophyta</taxon>
        <taxon>Embryophyta</taxon>
        <taxon>Tracheophyta</taxon>
        <taxon>Spermatophyta</taxon>
        <taxon>Magnoliopsida</taxon>
        <taxon>eudicotyledons</taxon>
        <taxon>Gunneridae</taxon>
        <taxon>Pentapetalae</taxon>
        <taxon>rosids</taxon>
        <taxon>fabids</taxon>
        <taxon>Fabales</taxon>
        <taxon>Fabaceae</taxon>
        <taxon>Papilionoideae</taxon>
        <taxon>50 kb inversion clade</taxon>
        <taxon>NPAAA clade</taxon>
        <taxon>indigoferoid/millettioid clade</taxon>
        <taxon>Phaseoleae</taxon>
        <taxon>Glycine</taxon>
        <taxon>Glycine subgen. Soja</taxon>
    </lineage>
</organism>
<name>CHS7_SOYBN</name>
<feature type="chain" id="PRO_0000216067" description="Chalcone synthase 7">
    <location>
        <begin position="1"/>
        <end position="389"/>
    </location>
</feature>
<feature type="active site" evidence="1">
    <location>
        <position position="164"/>
    </location>
</feature>
<sequence>MVSVAEIRQAQRAEGPATILAIGTANPPNRVDQSTYPDYYFRITNSDHMTELKEKFQRMCDKSMIKTRYMYLNEEILKENPNMCAYMAPSLDARQDMVVVEVPKLGKEAAVKAIKEWGQPKSKITHLIFCTTSGVDMPGADYQLTKQLGLRPYVKRYMMYQQGCFAGGTVLRLAKDLAENNKGARVLVVCSEITAVTFRGPSDTHLDSLVGQALFGDGAAAVIVGSDPIPQVEKPLYELVWTAQTIAPDSEGAIDGHLREVGLTFHLLKDVPGIVSKNIDKALFEAFNPLNISDYNSIFWIAHPGGPAILDQVEQKLGLKPEKMKATRDVLSEYGNMSSACVLFILDEMRRKSAENGHKTTGEGLEWGVLFGFGPGLTIETVVLHSVAI</sequence>
<comment type="function">
    <text>The primary product of this enzyme is 4,2',4',6'-tetrahydroxychalcone (also termed naringenin-chalcone or chalcone) which can under specific conditions spontaneously isomerize into naringenin.</text>
</comment>
<comment type="catalytic activity">
    <reaction evidence="1">
        <text>(E)-4-coumaroyl-CoA + 3 malonyl-CoA + 3 H(+) = 2',4,4',6'-tetrahydroxychalcone + 3 CO2 + 4 CoA</text>
        <dbReference type="Rhea" id="RHEA:11128"/>
        <dbReference type="ChEBI" id="CHEBI:15378"/>
        <dbReference type="ChEBI" id="CHEBI:15413"/>
        <dbReference type="ChEBI" id="CHEBI:16526"/>
        <dbReference type="ChEBI" id="CHEBI:57287"/>
        <dbReference type="ChEBI" id="CHEBI:57384"/>
        <dbReference type="ChEBI" id="CHEBI:85008"/>
        <dbReference type="EC" id="2.3.1.74"/>
    </reaction>
</comment>
<comment type="pathway">
    <text>Secondary metabolite biosynthesis; flavonoid biosynthesis.</text>
</comment>
<comment type="similarity">
    <text evidence="2">Belongs to the thiolase-like superfamily. Chalcone/stilbene synthases family.</text>
</comment>